<sequence>MSSRRRKPEWLRTRPPSGRRFTEIKETLRDRDLNTVCEEANCPNLGDCWSGRDGPGTATFMLLGDRCSRGCNFCDVATGGMDPLDPDEPANVAEAVAEIGLDYVVLTSVDRDDLDDGGAGHFAETIREIKRRDTSVLVEALIPDFQGDTDAVDRIIDADPDVVAHNVETVERLQWPVRDRRAGYEQSLDVLRQIAAADGCYAKTSLMLGVGEYAHEVYRTLGDLSEVGVDIVTFGQYLQPSRSHLEVFEYVTPDTFDVWKRVAETEFGFLYCASGPMVRSSFKAGELFVEALERDGLDIEAARAAAERQ</sequence>
<comment type="function">
    <text evidence="1">Catalyzes the radical-mediated insertion of two sulfur atoms into the C-6 and C-8 positions of the octanoyl moiety bound to the lipoyl domains of lipoate-dependent enzymes, thereby converting the octanoylated domains into lipoylated derivatives.</text>
</comment>
<comment type="catalytic activity">
    <reaction evidence="1">
        <text>[[Fe-S] cluster scaffold protein carrying a second [4Fe-4S](2+) cluster] + N(6)-octanoyl-L-lysyl-[protein] + 2 oxidized [2Fe-2S]-[ferredoxin] + 2 S-adenosyl-L-methionine + 4 H(+) = [[Fe-S] cluster scaffold protein] + N(6)-[(R)-dihydrolipoyl]-L-lysyl-[protein] + 4 Fe(3+) + 2 hydrogen sulfide + 2 5'-deoxyadenosine + 2 L-methionine + 2 reduced [2Fe-2S]-[ferredoxin]</text>
        <dbReference type="Rhea" id="RHEA:16585"/>
        <dbReference type="Rhea" id="RHEA-COMP:9928"/>
        <dbReference type="Rhea" id="RHEA-COMP:10000"/>
        <dbReference type="Rhea" id="RHEA-COMP:10001"/>
        <dbReference type="Rhea" id="RHEA-COMP:10475"/>
        <dbReference type="Rhea" id="RHEA-COMP:14568"/>
        <dbReference type="Rhea" id="RHEA-COMP:14569"/>
        <dbReference type="ChEBI" id="CHEBI:15378"/>
        <dbReference type="ChEBI" id="CHEBI:17319"/>
        <dbReference type="ChEBI" id="CHEBI:29034"/>
        <dbReference type="ChEBI" id="CHEBI:29919"/>
        <dbReference type="ChEBI" id="CHEBI:33722"/>
        <dbReference type="ChEBI" id="CHEBI:33737"/>
        <dbReference type="ChEBI" id="CHEBI:33738"/>
        <dbReference type="ChEBI" id="CHEBI:57844"/>
        <dbReference type="ChEBI" id="CHEBI:59789"/>
        <dbReference type="ChEBI" id="CHEBI:78809"/>
        <dbReference type="ChEBI" id="CHEBI:83100"/>
        <dbReference type="EC" id="2.8.1.8"/>
    </reaction>
</comment>
<comment type="cofactor">
    <cofactor evidence="1">
        <name>[4Fe-4S] cluster</name>
        <dbReference type="ChEBI" id="CHEBI:49883"/>
    </cofactor>
    <text evidence="1">Binds 2 [4Fe-4S] clusters per subunit. One cluster is coordinated with 3 cysteines and an exchangeable S-adenosyl-L-methionine.</text>
</comment>
<comment type="pathway">
    <text evidence="1">Protein modification; protein lipoylation via endogenous pathway; protein N(6)-(lipoyl)lysine from octanoyl-[acyl-carrier-protein]: step 2/2.</text>
</comment>
<comment type="subcellular location">
    <subcellularLocation>
        <location evidence="1">Cytoplasm</location>
    </subcellularLocation>
</comment>
<comment type="similarity">
    <text evidence="1">Belongs to the radical SAM superfamily. Lipoyl synthase family.</text>
</comment>
<reference key="1">
    <citation type="journal article" date="2005" name="Genome Res.">
        <title>Living with two extremes: conclusions from the genome sequence of Natronomonas pharaonis.</title>
        <authorList>
            <person name="Falb M."/>
            <person name="Pfeiffer F."/>
            <person name="Palm P."/>
            <person name="Rodewald K."/>
            <person name="Hickmann V."/>
            <person name="Tittor J."/>
            <person name="Oesterhelt D."/>
        </authorList>
    </citation>
    <scope>NUCLEOTIDE SEQUENCE [LARGE SCALE GENOMIC DNA]</scope>
    <source>
        <strain>ATCC 35678 / DSM 2160 / CIP 103997 / JCM 8858 / NBRC 14720 / NCIMB 2260 / Gabara</strain>
    </source>
</reference>
<name>LIPA_NATPD</name>
<dbReference type="EC" id="2.8.1.8" evidence="1"/>
<dbReference type="EMBL" id="CR936257">
    <property type="protein sequence ID" value="CAI48372.1"/>
    <property type="molecule type" value="Genomic_DNA"/>
</dbReference>
<dbReference type="SMR" id="Q3IU11"/>
<dbReference type="STRING" id="348780.NP_0562A"/>
<dbReference type="EnsemblBacteria" id="CAI48372">
    <property type="protein sequence ID" value="CAI48372"/>
    <property type="gene ID" value="NP_0562A"/>
</dbReference>
<dbReference type="KEGG" id="nph:NP_0562A"/>
<dbReference type="eggNOG" id="arCOG00660">
    <property type="taxonomic scope" value="Archaea"/>
</dbReference>
<dbReference type="HOGENOM" id="CLU_033144_2_0_2"/>
<dbReference type="OrthoDB" id="145957at2157"/>
<dbReference type="UniPathway" id="UPA00538">
    <property type="reaction ID" value="UER00593"/>
</dbReference>
<dbReference type="Proteomes" id="UP000002698">
    <property type="component" value="Chromosome"/>
</dbReference>
<dbReference type="GO" id="GO:0005737">
    <property type="term" value="C:cytoplasm"/>
    <property type="evidence" value="ECO:0007669"/>
    <property type="project" value="UniProtKB-SubCell"/>
</dbReference>
<dbReference type="GO" id="GO:0051539">
    <property type="term" value="F:4 iron, 4 sulfur cluster binding"/>
    <property type="evidence" value="ECO:0007669"/>
    <property type="project" value="UniProtKB-UniRule"/>
</dbReference>
<dbReference type="GO" id="GO:0016992">
    <property type="term" value="F:lipoate synthase activity"/>
    <property type="evidence" value="ECO:0007669"/>
    <property type="project" value="UniProtKB-UniRule"/>
</dbReference>
<dbReference type="GO" id="GO:0046872">
    <property type="term" value="F:metal ion binding"/>
    <property type="evidence" value="ECO:0007669"/>
    <property type="project" value="UniProtKB-KW"/>
</dbReference>
<dbReference type="CDD" id="cd01335">
    <property type="entry name" value="Radical_SAM"/>
    <property type="match status" value="1"/>
</dbReference>
<dbReference type="Gene3D" id="3.20.20.70">
    <property type="entry name" value="Aldolase class I"/>
    <property type="match status" value="1"/>
</dbReference>
<dbReference type="HAMAP" id="MF_00206">
    <property type="entry name" value="Lipoyl_synth"/>
    <property type="match status" value="1"/>
</dbReference>
<dbReference type="InterPro" id="IPR013785">
    <property type="entry name" value="Aldolase_TIM"/>
</dbReference>
<dbReference type="InterPro" id="IPR006638">
    <property type="entry name" value="Elp3/MiaA/NifB-like_rSAM"/>
</dbReference>
<dbReference type="InterPro" id="IPR031691">
    <property type="entry name" value="LIAS_N"/>
</dbReference>
<dbReference type="InterPro" id="IPR003698">
    <property type="entry name" value="Lipoyl_synth"/>
</dbReference>
<dbReference type="InterPro" id="IPR007197">
    <property type="entry name" value="rSAM"/>
</dbReference>
<dbReference type="NCBIfam" id="TIGR00510">
    <property type="entry name" value="lipA"/>
    <property type="match status" value="1"/>
</dbReference>
<dbReference type="NCBIfam" id="NF004019">
    <property type="entry name" value="PRK05481.1"/>
    <property type="match status" value="1"/>
</dbReference>
<dbReference type="NCBIfam" id="NF009544">
    <property type="entry name" value="PRK12928.1"/>
    <property type="match status" value="1"/>
</dbReference>
<dbReference type="PANTHER" id="PTHR10949">
    <property type="entry name" value="LIPOYL SYNTHASE"/>
    <property type="match status" value="1"/>
</dbReference>
<dbReference type="PANTHER" id="PTHR10949:SF0">
    <property type="entry name" value="LIPOYL SYNTHASE, MITOCHONDRIAL"/>
    <property type="match status" value="1"/>
</dbReference>
<dbReference type="Pfam" id="PF16881">
    <property type="entry name" value="LIAS_N"/>
    <property type="match status" value="1"/>
</dbReference>
<dbReference type="Pfam" id="PF04055">
    <property type="entry name" value="Radical_SAM"/>
    <property type="match status" value="1"/>
</dbReference>
<dbReference type="PIRSF" id="PIRSF005963">
    <property type="entry name" value="Lipoyl_synth"/>
    <property type="match status" value="1"/>
</dbReference>
<dbReference type="SFLD" id="SFLDF00271">
    <property type="entry name" value="lipoyl_synthase"/>
    <property type="match status" value="1"/>
</dbReference>
<dbReference type="SFLD" id="SFLDG01058">
    <property type="entry name" value="lipoyl_synthase_like"/>
    <property type="match status" value="1"/>
</dbReference>
<dbReference type="SMART" id="SM00729">
    <property type="entry name" value="Elp3"/>
    <property type="match status" value="1"/>
</dbReference>
<dbReference type="SUPFAM" id="SSF102114">
    <property type="entry name" value="Radical SAM enzymes"/>
    <property type="match status" value="1"/>
</dbReference>
<dbReference type="PROSITE" id="PS51918">
    <property type="entry name" value="RADICAL_SAM"/>
    <property type="match status" value="1"/>
</dbReference>
<organism>
    <name type="scientific">Natronomonas pharaonis (strain ATCC 35678 / DSM 2160 / CIP 103997 / JCM 8858 / NBRC 14720 / NCIMB 2260 / Gabara)</name>
    <name type="common">Halobacterium pharaonis</name>
    <dbReference type="NCBI Taxonomy" id="348780"/>
    <lineage>
        <taxon>Archaea</taxon>
        <taxon>Methanobacteriati</taxon>
        <taxon>Methanobacteriota</taxon>
        <taxon>Stenosarchaea group</taxon>
        <taxon>Halobacteria</taxon>
        <taxon>Halobacteriales</taxon>
        <taxon>Haloarculaceae</taxon>
        <taxon>Natronomonas</taxon>
    </lineage>
</organism>
<accession>Q3IU11</accession>
<protein>
    <recommendedName>
        <fullName evidence="1">Lipoyl synthase</fullName>
        <ecNumber evidence="1">2.8.1.8</ecNumber>
    </recommendedName>
    <alternativeName>
        <fullName evidence="1">Lip-syn</fullName>
        <shortName evidence="1">LS</shortName>
    </alternativeName>
    <alternativeName>
        <fullName evidence="1">Lipoate synthase</fullName>
    </alternativeName>
    <alternativeName>
        <fullName evidence="1">Lipoic acid synthase</fullName>
    </alternativeName>
    <alternativeName>
        <fullName evidence="1">Sulfur insertion protein LipA</fullName>
    </alternativeName>
</protein>
<evidence type="ECO:0000255" key="1">
    <source>
        <dbReference type="HAMAP-Rule" id="MF_00206"/>
    </source>
</evidence>
<evidence type="ECO:0000255" key="2">
    <source>
        <dbReference type="PROSITE-ProRule" id="PRU01266"/>
    </source>
</evidence>
<keyword id="KW-0004">4Fe-4S</keyword>
<keyword id="KW-0963">Cytoplasm</keyword>
<keyword id="KW-0408">Iron</keyword>
<keyword id="KW-0411">Iron-sulfur</keyword>
<keyword id="KW-0479">Metal-binding</keyword>
<keyword id="KW-1185">Reference proteome</keyword>
<keyword id="KW-0949">S-adenosyl-L-methionine</keyword>
<keyword id="KW-0808">Transferase</keyword>
<feature type="chain" id="PRO_0000325322" description="Lipoyl synthase">
    <location>
        <begin position="1"/>
        <end position="309"/>
    </location>
</feature>
<feature type="domain" description="Radical SAM core" evidence="2">
    <location>
        <begin position="53"/>
        <end position="270"/>
    </location>
</feature>
<feature type="binding site" evidence="1">
    <location>
        <position position="37"/>
    </location>
    <ligand>
        <name>[4Fe-4S] cluster</name>
        <dbReference type="ChEBI" id="CHEBI:49883"/>
        <label>1</label>
    </ligand>
</feature>
<feature type="binding site" evidence="1">
    <location>
        <position position="42"/>
    </location>
    <ligand>
        <name>[4Fe-4S] cluster</name>
        <dbReference type="ChEBI" id="CHEBI:49883"/>
        <label>1</label>
    </ligand>
</feature>
<feature type="binding site" evidence="1">
    <location>
        <position position="48"/>
    </location>
    <ligand>
        <name>[4Fe-4S] cluster</name>
        <dbReference type="ChEBI" id="CHEBI:49883"/>
        <label>1</label>
    </ligand>
</feature>
<feature type="binding site" evidence="1">
    <location>
        <position position="67"/>
    </location>
    <ligand>
        <name>[4Fe-4S] cluster</name>
        <dbReference type="ChEBI" id="CHEBI:49883"/>
        <label>2</label>
        <note>4Fe-4S-S-AdoMet</note>
    </ligand>
</feature>
<feature type="binding site" evidence="1">
    <location>
        <position position="71"/>
    </location>
    <ligand>
        <name>[4Fe-4S] cluster</name>
        <dbReference type="ChEBI" id="CHEBI:49883"/>
        <label>2</label>
        <note>4Fe-4S-S-AdoMet</note>
    </ligand>
</feature>
<feature type="binding site" evidence="1">
    <location>
        <position position="74"/>
    </location>
    <ligand>
        <name>[4Fe-4S] cluster</name>
        <dbReference type="ChEBI" id="CHEBI:49883"/>
        <label>2</label>
        <note>4Fe-4S-S-AdoMet</note>
    </ligand>
</feature>
<feature type="binding site" evidence="1">
    <location>
        <position position="281"/>
    </location>
    <ligand>
        <name>[4Fe-4S] cluster</name>
        <dbReference type="ChEBI" id="CHEBI:49883"/>
        <label>1</label>
    </ligand>
</feature>
<gene>
    <name evidence="1" type="primary">lipA</name>
    <name type="ordered locus">NP_0562A</name>
</gene>
<proteinExistence type="inferred from homology"/>